<keyword id="KW-0687">Ribonucleoprotein</keyword>
<keyword id="KW-0689">Ribosomal protein</keyword>
<dbReference type="EMBL" id="CP000702">
    <property type="protein sequence ID" value="ABQ47235.1"/>
    <property type="molecule type" value="Genomic_DNA"/>
</dbReference>
<dbReference type="RefSeq" id="WP_004081989.1">
    <property type="nucleotide sequence ID" value="NC_009486.1"/>
</dbReference>
<dbReference type="SMR" id="A5IM12"/>
<dbReference type="STRING" id="390874.Tpet_1221"/>
<dbReference type="KEGG" id="tpt:Tpet_1221"/>
<dbReference type="eggNOG" id="COG0335">
    <property type="taxonomic scope" value="Bacteria"/>
</dbReference>
<dbReference type="HOGENOM" id="CLU_103507_2_2_0"/>
<dbReference type="Proteomes" id="UP000006558">
    <property type="component" value="Chromosome"/>
</dbReference>
<dbReference type="GO" id="GO:0022625">
    <property type="term" value="C:cytosolic large ribosomal subunit"/>
    <property type="evidence" value="ECO:0007669"/>
    <property type="project" value="TreeGrafter"/>
</dbReference>
<dbReference type="GO" id="GO:0003735">
    <property type="term" value="F:structural constituent of ribosome"/>
    <property type="evidence" value="ECO:0007669"/>
    <property type="project" value="InterPro"/>
</dbReference>
<dbReference type="GO" id="GO:0006412">
    <property type="term" value="P:translation"/>
    <property type="evidence" value="ECO:0007669"/>
    <property type="project" value="UniProtKB-UniRule"/>
</dbReference>
<dbReference type="FunFam" id="2.30.30.790:FF:000001">
    <property type="entry name" value="50S ribosomal protein L19"/>
    <property type="match status" value="1"/>
</dbReference>
<dbReference type="Gene3D" id="2.30.30.790">
    <property type="match status" value="1"/>
</dbReference>
<dbReference type="HAMAP" id="MF_00402">
    <property type="entry name" value="Ribosomal_bL19"/>
    <property type="match status" value="1"/>
</dbReference>
<dbReference type="InterPro" id="IPR001857">
    <property type="entry name" value="Ribosomal_bL19"/>
</dbReference>
<dbReference type="InterPro" id="IPR018257">
    <property type="entry name" value="Ribosomal_bL19_CS"/>
</dbReference>
<dbReference type="InterPro" id="IPR038657">
    <property type="entry name" value="Ribosomal_bL19_sf"/>
</dbReference>
<dbReference type="InterPro" id="IPR008991">
    <property type="entry name" value="Translation_prot_SH3-like_sf"/>
</dbReference>
<dbReference type="NCBIfam" id="TIGR01024">
    <property type="entry name" value="rplS_bact"/>
    <property type="match status" value="1"/>
</dbReference>
<dbReference type="PANTHER" id="PTHR15680:SF9">
    <property type="entry name" value="LARGE RIBOSOMAL SUBUNIT PROTEIN BL19M"/>
    <property type="match status" value="1"/>
</dbReference>
<dbReference type="PANTHER" id="PTHR15680">
    <property type="entry name" value="RIBOSOMAL PROTEIN L19"/>
    <property type="match status" value="1"/>
</dbReference>
<dbReference type="Pfam" id="PF01245">
    <property type="entry name" value="Ribosomal_L19"/>
    <property type="match status" value="1"/>
</dbReference>
<dbReference type="PIRSF" id="PIRSF002191">
    <property type="entry name" value="Ribosomal_L19"/>
    <property type="match status" value="1"/>
</dbReference>
<dbReference type="PRINTS" id="PR00061">
    <property type="entry name" value="RIBOSOMALL19"/>
</dbReference>
<dbReference type="SUPFAM" id="SSF50104">
    <property type="entry name" value="Translation proteins SH3-like domain"/>
    <property type="match status" value="1"/>
</dbReference>
<dbReference type="PROSITE" id="PS01015">
    <property type="entry name" value="RIBOSOMAL_L19"/>
    <property type="match status" value="1"/>
</dbReference>
<gene>
    <name evidence="1" type="primary">rplS</name>
    <name type="ordered locus">Tpet_1221</name>
</gene>
<protein>
    <recommendedName>
        <fullName evidence="1">Large ribosomal subunit protein bL19</fullName>
    </recommendedName>
    <alternativeName>
        <fullName evidence="2">50S ribosomal protein L19</fullName>
    </alternativeName>
</protein>
<evidence type="ECO:0000255" key="1">
    <source>
        <dbReference type="HAMAP-Rule" id="MF_00402"/>
    </source>
</evidence>
<evidence type="ECO:0000305" key="2"/>
<proteinExistence type="inferred from homology"/>
<reference key="1">
    <citation type="submission" date="2007-05" db="EMBL/GenBank/DDBJ databases">
        <title>Complete sequence of Thermotoga petrophila RKU-1.</title>
        <authorList>
            <consortium name="US DOE Joint Genome Institute"/>
            <person name="Copeland A."/>
            <person name="Lucas S."/>
            <person name="Lapidus A."/>
            <person name="Barry K."/>
            <person name="Glavina del Rio T."/>
            <person name="Dalin E."/>
            <person name="Tice H."/>
            <person name="Pitluck S."/>
            <person name="Sims D."/>
            <person name="Brettin T."/>
            <person name="Bruce D."/>
            <person name="Detter J.C."/>
            <person name="Han C."/>
            <person name="Tapia R."/>
            <person name="Schmutz J."/>
            <person name="Larimer F."/>
            <person name="Land M."/>
            <person name="Hauser L."/>
            <person name="Kyrpides N."/>
            <person name="Mikhailova N."/>
            <person name="Nelson K."/>
            <person name="Gogarten J.P."/>
            <person name="Noll K."/>
            <person name="Richardson P."/>
        </authorList>
    </citation>
    <scope>NUCLEOTIDE SEQUENCE [LARGE SCALE GENOMIC DNA]</scope>
    <source>
        <strain>ATCC BAA-488 / DSM 13995 / JCM 10881 / RKU-1</strain>
    </source>
</reference>
<comment type="function">
    <text evidence="1">This protein is located at the 30S-50S ribosomal subunit interface and may play a role in the structure and function of the aminoacyl-tRNA binding site.</text>
</comment>
<comment type="similarity">
    <text evidence="1">Belongs to the bacterial ribosomal protein bL19 family.</text>
</comment>
<sequence length="115" mass="13442">MDHLVKIIEKKYEKKEIPDFRPGDTVRVHVKVIEGDRERTQVFEGIVIAKRGSGINKTFTVRRIGSHGVGVERIFPVHSPVVEKIEVVRKGKVRRAKLYYLRNVRGKIRIKERRD</sequence>
<organism>
    <name type="scientific">Thermotoga petrophila (strain ATCC BAA-488 / DSM 13995 / JCM 10881 / RKU-1)</name>
    <dbReference type="NCBI Taxonomy" id="390874"/>
    <lineage>
        <taxon>Bacteria</taxon>
        <taxon>Thermotogati</taxon>
        <taxon>Thermotogota</taxon>
        <taxon>Thermotogae</taxon>
        <taxon>Thermotogales</taxon>
        <taxon>Thermotogaceae</taxon>
        <taxon>Thermotoga</taxon>
    </lineage>
</organism>
<accession>A5IM12</accession>
<name>RL19_THEP1</name>
<feature type="chain" id="PRO_1000049759" description="Large ribosomal subunit protein bL19">
    <location>
        <begin position="1"/>
        <end position="115"/>
    </location>
</feature>